<organism>
    <name type="scientific">Dhori virus (strain Indian/1313/61)</name>
    <name type="common">Dho</name>
    <dbReference type="NCBI Taxonomy" id="11319"/>
    <lineage>
        <taxon>Viruses</taxon>
        <taxon>Riboviria</taxon>
        <taxon>Orthornavirae</taxon>
        <taxon>Negarnaviricota</taxon>
        <taxon>Polyploviricotina</taxon>
        <taxon>Insthoviricetes</taxon>
        <taxon>Articulavirales</taxon>
        <taxon>Orthomyxoviridae</taxon>
        <taxon>Thogotovirus</taxon>
        <taxon>Thogotovirus dhoriense</taxon>
    </lineage>
</organism>
<proteinExistence type="predicted"/>
<dbReference type="EMBL" id="M95567">
    <property type="protein sequence ID" value="AAA42965.1"/>
    <property type="molecule type" value="Genomic_RNA"/>
</dbReference>
<dbReference type="PIR" id="JQ1748">
    <property type="entry name" value="JQ1748"/>
</dbReference>
<accession>Q01480</accession>
<feature type="chain" id="PRO_0000078903" description="Putative uncharacterized protein M2">
    <location>
        <begin position="1" status="less than"/>
        <end position="141"/>
    </location>
</feature>
<feature type="region of interest" description="Disordered" evidence="1">
    <location>
        <begin position="1"/>
        <end position="101"/>
    </location>
</feature>
<feature type="compositionally biased region" description="Basic and acidic residues" evidence="1">
    <location>
        <begin position="27"/>
        <end position="70"/>
    </location>
</feature>
<feature type="non-terminal residue">
    <location>
        <position position="1"/>
    </location>
</feature>
<sequence>FRGRAPRPLVGRSCQAAQHPHTRPKRQVRDCGREGDLRAGKAADRRLPRARETCSRFGEGVRQKDVHKGPVEGTVLNPAGPPGDQAQRADVPDPGRSRRATVPIAQERRLEHRPILVYPESDNMYNLIREAWLSLERGTHR</sequence>
<name>YM2_DHVI1</name>
<reference key="1">
    <citation type="journal article" date="1992" name="J. Gen. Virol.">
        <title>Nucleotide sequence of the tick-borne orthomyxo-like Dhori/India/1313/61 virus membrane protein gene.</title>
        <authorList>
            <person name="Clay W.C."/>
            <person name="Fuller F.J."/>
        </authorList>
    </citation>
    <scope>NUCLEOTIDE SEQUENCE [GENOMIC RNA]</scope>
</reference>
<gene>
    <name type="primary">M2</name>
</gene>
<protein>
    <recommendedName>
        <fullName>Putative uncharacterized protein M2</fullName>
    </recommendedName>
</protein>
<evidence type="ECO:0000256" key="1">
    <source>
        <dbReference type="SAM" id="MobiDB-lite"/>
    </source>
</evidence>
<organismHost>
    <name type="scientific">Homo sapiens</name>
    <name type="common">Human</name>
    <dbReference type="NCBI Taxonomy" id="9606"/>
</organismHost>
<organismHost>
    <name type="scientific">Ixodida</name>
    <name type="common">ticks</name>
    <dbReference type="NCBI Taxonomy" id="6935"/>
</organismHost>